<evidence type="ECO:0000250" key="1"/>
<evidence type="ECO:0000305" key="2"/>
<gene>
    <name type="primary">hop</name>
</gene>
<reference key="1">
    <citation type="journal article" date="1993" name="J. Bacteriol.">
        <title>Bacterioopsin, haloopsin, and sensory opsin I of the halobacterial isolate Halobacterium sp. strain SG1: three new members of a growing family.</title>
        <authorList>
            <person name="Soppa J."/>
            <person name="Duschl J."/>
            <person name="Oesterhelt D."/>
        </authorList>
    </citation>
    <scope>NUCLEOTIDE SEQUENCE [GENOMIC DNA]</scope>
</reference>
<feature type="chain" id="PRO_0000196265" description="Halorhodopsin">
    <location>
        <begin position="1"/>
        <end position="284"/>
    </location>
</feature>
<feature type="topological domain" description="Extracellular" evidence="1">
    <location>
        <begin position="1"/>
        <end position="30"/>
    </location>
</feature>
<feature type="transmembrane region" description="Helical; Name=Helix A" evidence="1">
    <location>
        <begin position="31"/>
        <end position="56"/>
    </location>
</feature>
<feature type="topological domain" description="Cytoplasmic" evidence="1">
    <location>
        <begin position="57"/>
        <end position="62"/>
    </location>
</feature>
<feature type="transmembrane region" description="Helical; Name=Helix B" evidence="1">
    <location>
        <begin position="63"/>
        <end position="86"/>
    </location>
</feature>
<feature type="topological domain" description="Extracellular" evidence="1">
    <location>
        <begin position="87"/>
        <end position="110"/>
    </location>
</feature>
<feature type="transmembrane region" description="Helical; Name=Helix C" evidence="1">
    <location>
        <begin position="111"/>
        <end position="132"/>
    </location>
</feature>
<feature type="topological domain" description="Cytoplasmic" evidence="1">
    <location>
        <begin position="133"/>
        <end position="135"/>
    </location>
</feature>
<feature type="transmembrane region" description="Helical; Name=Helix D" evidence="1">
    <location>
        <begin position="136"/>
        <end position="159"/>
    </location>
</feature>
<feature type="topological domain" description="Extracellular" evidence="1">
    <location>
        <begin position="160"/>
        <end position="162"/>
    </location>
</feature>
<feature type="transmembrane region" description="Helical; Name=Helix E" evidence="1">
    <location>
        <begin position="163"/>
        <end position="185"/>
    </location>
</feature>
<feature type="topological domain" description="Cytoplasmic" evidence="1">
    <location>
        <begin position="186"/>
        <end position="197"/>
    </location>
</feature>
<feature type="transmembrane region" description="Helical; Name=Helix F" evidence="1">
    <location>
        <begin position="198"/>
        <end position="221"/>
    </location>
</feature>
<feature type="topological domain" description="Extracellular" evidence="1">
    <location>
        <begin position="222"/>
        <end position="230"/>
    </location>
</feature>
<feature type="transmembrane region" description="Helical; Name=Helix G" evidence="1">
    <location>
        <begin position="231"/>
        <end position="259"/>
    </location>
</feature>
<feature type="topological domain" description="Cytoplasmic" evidence="1">
    <location>
        <begin position="260"/>
        <end position="284"/>
    </location>
</feature>
<feature type="modified residue" description="N6-(retinylidene)lysine" evidence="1">
    <location>
        <position position="246"/>
    </location>
</feature>
<name>BACH_HALSS</name>
<accession>P33742</accession>
<organism>
    <name type="scientific">Halobacterium sp. (strain SG1)</name>
    <dbReference type="NCBI Taxonomy" id="33006"/>
    <lineage>
        <taxon>Archaea</taxon>
        <taxon>Methanobacteriati</taxon>
        <taxon>Methanobacteriota</taxon>
        <taxon>Stenosarchaea group</taxon>
        <taxon>Halobacteria</taxon>
        <taxon>Halobacteriales</taxon>
        <taxon>Halobacteriaceae</taxon>
        <taxon>Halobacterium</taxon>
    </lineage>
</organism>
<protein>
    <recommendedName>
        <fullName>Halorhodopsin</fullName>
        <shortName>HR</shortName>
    </recommendedName>
</protein>
<dbReference type="EMBL" id="X70292">
    <property type="protein sequence ID" value="CAA49773.1"/>
    <property type="molecule type" value="Genomic_DNA"/>
</dbReference>
<dbReference type="PIR" id="S78781">
    <property type="entry name" value="S29988"/>
</dbReference>
<dbReference type="SMR" id="P33742"/>
<dbReference type="GO" id="GO:0005886">
    <property type="term" value="C:plasma membrane"/>
    <property type="evidence" value="ECO:0007669"/>
    <property type="project" value="UniProtKB-SubCell"/>
</dbReference>
<dbReference type="GO" id="GO:0005216">
    <property type="term" value="F:monoatomic ion channel activity"/>
    <property type="evidence" value="ECO:0007669"/>
    <property type="project" value="InterPro"/>
</dbReference>
<dbReference type="GO" id="GO:0009881">
    <property type="term" value="F:photoreceptor activity"/>
    <property type="evidence" value="ECO:0007669"/>
    <property type="project" value="UniProtKB-KW"/>
</dbReference>
<dbReference type="GO" id="GO:0007602">
    <property type="term" value="P:phototransduction"/>
    <property type="evidence" value="ECO:0007669"/>
    <property type="project" value="UniProtKB-KW"/>
</dbReference>
<dbReference type="CDD" id="cd15243">
    <property type="entry name" value="7tm_Halorhodopsin"/>
    <property type="match status" value="1"/>
</dbReference>
<dbReference type="Gene3D" id="1.20.1070.10">
    <property type="entry name" value="Rhodopsin 7-helix transmembrane proteins"/>
    <property type="match status" value="1"/>
</dbReference>
<dbReference type="InterPro" id="IPR001425">
    <property type="entry name" value="Arc/bac/fun_rhodopsins"/>
</dbReference>
<dbReference type="InterPro" id="IPR018229">
    <property type="entry name" value="Rhodopsin_retinal_BS"/>
</dbReference>
<dbReference type="PANTHER" id="PTHR28286">
    <property type="match status" value="1"/>
</dbReference>
<dbReference type="PANTHER" id="PTHR28286:SF2">
    <property type="entry name" value="BACTERIORHODOPSIN _OPSIN, NOPA (EUROFUNG)"/>
    <property type="match status" value="1"/>
</dbReference>
<dbReference type="Pfam" id="PF01036">
    <property type="entry name" value="Bac_rhodopsin"/>
    <property type="match status" value="1"/>
</dbReference>
<dbReference type="PRINTS" id="PR00251">
    <property type="entry name" value="BACTRLOPSIN"/>
</dbReference>
<dbReference type="SMART" id="SM01021">
    <property type="entry name" value="Bac_rhodopsin"/>
    <property type="match status" value="1"/>
</dbReference>
<dbReference type="SUPFAM" id="SSF81321">
    <property type="entry name" value="Family A G protein-coupled receptor-like"/>
    <property type="match status" value="1"/>
</dbReference>
<dbReference type="PROSITE" id="PS00950">
    <property type="entry name" value="BACTERIAL_OPSIN_1"/>
    <property type="match status" value="1"/>
</dbReference>
<dbReference type="PROSITE" id="PS00327">
    <property type="entry name" value="BACTERIAL_OPSIN_RET"/>
    <property type="match status" value="1"/>
</dbReference>
<proteinExistence type="inferred from homology"/>
<sequence length="284" mass="30256">MIETAAADILAGGMVPLEMTQTQIFEAVQSDTLLASSLWINIALAGLSILLFVYMGRNVEDPRAQLIFVATLMVPLVSISSYTGLVSGLTVSFLEMPAGHALAGQEVLTPWGRYLTWALSTPMILIAVGLLAGSNTTKLFTAVVADIGMCVTGLAAALTTSSYLLRWVWYAISCAFFVVVLYILLAEWAEDAEIAGTADIFNTLKVLTVVLWLGYPIFWALGAEGLAVLDVAITSWAYSGMDIVAKYLFAFLLLRWVVNNERTVADVASGLGSGSRGGAAPADD</sequence>
<keyword id="KW-1003">Cell membrane</keyword>
<keyword id="KW-0868">Chloride</keyword>
<keyword id="KW-0157">Chromophore</keyword>
<keyword id="KW-0406">Ion transport</keyword>
<keyword id="KW-0472">Membrane</keyword>
<keyword id="KW-0600">Photoreceptor protein</keyword>
<keyword id="KW-0675">Receptor</keyword>
<keyword id="KW-0681">Retinal protein</keyword>
<keyword id="KW-0716">Sensory transduction</keyword>
<keyword id="KW-0812">Transmembrane</keyword>
<keyword id="KW-1133">Transmembrane helix</keyword>
<keyword id="KW-0813">Transport</keyword>
<comment type="function">
    <text>Light-driven chloride pump.</text>
</comment>
<comment type="subcellular location">
    <subcellularLocation>
        <location>Cell membrane</location>
        <topology>Multi-pass membrane protein</topology>
    </subcellularLocation>
</comment>
<comment type="similarity">
    <text evidence="2">Belongs to the archaeal/bacterial/fungal opsin family.</text>
</comment>